<evidence type="ECO:0000255" key="1">
    <source>
        <dbReference type="HAMAP-Rule" id="MF_01621"/>
    </source>
</evidence>
<name>FADB_VIBCM</name>
<reference key="1">
    <citation type="journal article" date="2008" name="PLoS ONE">
        <title>A recalibrated molecular clock and independent origins for the cholera pandemic clones.</title>
        <authorList>
            <person name="Feng L."/>
            <person name="Reeves P.R."/>
            <person name="Lan R."/>
            <person name="Ren Y."/>
            <person name="Gao C."/>
            <person name="Zhou Z."/>
            <person name="Ren Y."/>
            <person name="Cheng J."/>
            <person name="Wang W."/>
            <person name="Wang J."/>
            <person name="Qian W."/>
            <person name="Li D."/>
            <person name="Wang L."/>
        </authorList>
    </citation>
    <scope>NUCLEOTIDE SEQUENCE [LARGE SCALE GENOMIC DNA]</scope>
    <source>
        <strain>M66-2</strain>
    </source>
</reference>
<gene>
    <name evidence="1" type="primary">fadB</name>
    <name type="ordered locus">VCM66_2678</name>
</gene>
<dbReference type="EC" id="4.2.1.17" evidence="1"/>
<dbReference type="EC" id="5.1.2.3" evidence="1"/>
<dbReference type="EC" id="5.3.3.8" evidence="1"/>
<dbReference type="EC" id="1.1.1.35" evidence="1"/>
<dbReference type="EMBL" id="CP001233">
    <property type="protein sequence ID" value="ACP06970.1"/>
    <property type="molecule type" value="Genomic_DNA"/>
</dbReference>
<dbReference type="RefSeq" id="WP_000640242.1">
    <property type="nucleotide sequence ID" value="NC_012578.1"/>
</dbReference>
<dbReference type="SMR" id="C3LSI3"/>
<dbReference type="KEGG" id="vcm:VCM66_2678"/>
<dbReference type="HOGENOM" id="CLU_009834_16_3_6"/>
<dbReference type="UniPathway" id="UPA00659"/>
<dbReference type="Proteomes" id="UP000001217">
    <property type="component" value="Chromosome I"/>
</dbReference>
<dbReference type="GO" id="GO:0036125">
    <property type="term" value="C:fatty acid beta-oxidation multienzyme complex"/>
    <property type="evidence" value="ECO:0007669"/>
    <property type="project" value="InterPro"/>
</dbReference>
<dbReference type="GO" id="GO:0008692">
    <property type="term" value="F:3-hydroxybutyryl-CoA epimerase activity"/>
    <property type="evidence" value="ECO:0007669"/>
    <property type="project" value="UniProtKB-UniRule"/>
</dbReference>
<dbReference type="GO" id="GO:0004165">
    <property type="term" value="F:delta(3)-delta(2)-enoyl-CoA isomerase activity"/>
    <property type="evidence" value="ECO:0007669"/>
    <property type="project" value="UniProtKB-UniRule"/>
</dbReference>
<dbReference type="GO" id="GO:0004300">
    <property type="term" value="F:enoyl-CoA hydratase activity"/>
    <property type="evidence" value="ECO:0007669"/>
    <property type="project" value="UniProtKB-UniRule"/>
</dbReference>
<dbReference type="GO" id="GO:0016509">
    <property type="term" value="F:long-chain-3-hydroxyacyl-CoA dehydrogenase activity"/>
    <property type="evidence" value="ECO:0007669"/>
    <property type="project" value="TreeGrafter"/>
</dbReference>
<dbReference type="GO" id="GO:0070403">
    <property type="term" value="F:NAD+ binding"/>
    <property type="evidence" value="ECO:0007669"/>
    <property type="project" value="InterPro"/>
</dbReference>
<dbReference type="GO" id="GO:0006635">
    <property type="term" value="P:fatty acid beta-oxidation"/>
    <property type="evidence" value="ECO:0007669"/>
    <property type="project" value="UniProtKB-UniRule"/>
</dbReference>
<dbReference type="CDD" id="cd06558">
    <property type="entry name" value="crotonase-like"/>
    <property type="match status" value="1"/>
</dbReference>
<dbReference type="FunFam" id="1.10.1040.50:FF:000001">
    <property type="entry name" value="Fatty acid oxidation complex subunit alpha"/>
    <property type="match status" value="1"/>
</dbReference>
<dbReference type="FunFam" id="3.40.50.720:FF:000009">
    <property type="entry name" value="Fatty oxidation complex, alpha subunit"/>
    <property type="match status" value="1"/>
</dbReference>
<dbReference type="Gene3D" id="1.10.1040.50">
    <property type="match status" value="1"/>
</dbReference>
<dbReference type="Gene3D" id="3.90.226.10">
    <property type="entry name" value="2-enoyl-CoA Hydratase, Chain A, domain 1"/>
    <property type="match status" value="1"/>
</dbReference>
<dbReference type="Gene3D" id="3.40.50.720">
    <property type="entry name" value="NAD(P)-binding Rossmann-like Domain"/>
    <property type="match status" value="1"/>
</dbReference>
<dbReference type="HAMAP" id="MF_01621">
    <property type="entry name" value="FadB"/>
    <property type="match status" value="1"/>
</dbReference>
<dbReference type="InterPro" id="IPR006180">
    <property type="entry name" value="3-OHacyl-CoA_DH_CS"/>
</dbReference>
<dbReference type="InterPro" id="IPR006176">
    <property type="entry name" value="3-OHacyl-CoA_DH_NAD-bd"/>
</dbReference>
<dbReference type="InterPro" id="IPR006108">
    <property type="entry name" value="3HC_DH_C"/>
</dbReference>
<dbReference type="InterPro" id="IPR008927">
    <property type="entry name" value="6-PGluconate_DH-like_C_sf"/>
</dbReference>
<dbReference type="InterPro" id="IPR029045">
    <property type="entry name" value="ClpP/crotonase-like_dom_sf"/>
</dbReference>
<dbReference type="InterPro" id="IPR001753">
    <property type="entry name" value="Enoyl-CoA_hydra/iso"/>
</dbReference>
<dbReference type="InterPro" id="IPR050136">
    <property type="entry name" value="FA_oxidation_alpha_subunit"/>
</dbReference>
<dbReference type="InterPro" id="IPR012799">
    <property type="entry name" value="FadB"/>
</dbReference>
<dbReference type="InterPro" id="IPR036291">
    <property type="entry name" value="NAD(P)-bd_dom_sf"/>
</dbReference>
<dbReference type="NCBIfam" id="TIGR02437">
    <property type="entry name" value="FadB"/>
    <property type="match status" value="1"/>
</dbReference>
<dbReference type="NCBIfam" id="NF008727">
    <property type="entry name" value="PRK11730.1"/>
    <property type="match status" value="1"/>
</dbReference>
<dbReference type="PANTHER" id="PTHR43612">
    <property type="entry name" value="TRIFUNCTIONAL ENZYME SUBUNIT ALPHA"/>
    <property type="match status" value="1"/>
</dbReference>
<dbReference type="PANTHER" id="PTHR43612:SF3">
    <property type="entry name" value="TRIFUNCTIONAL ENZYME SUBUNIT ALPHA, MITOCHONDRIAL"/>
    <property type="match status" value="1"/>
</dbReference>
<dbReference type="Pfam" id="PF00725">
    <property type="entry name" value="3HCDH"/>
    <property type="match status" value="2"/>
</dbReference>
<dbReference type="Pfam" id="PF02737">
    <property type="entry name" value="3HCDH_N"/>
    <property type="match status" value="1"/>
</dbReference>
<dbReference type="Pfam" id="PF00378">
    <property type="entry name" value="ECH_1"/>
    <property type="match status" value="1"/>
</dbReference>
<dbReference type="SUPFAM" id="SSF48179">
    <property type="entry name" value="6-phosphogluconate dehydrogenase C-terminal domain-like"/>
    <property type="match status" value="2"/>
</dbReference>
<dbReference type="SUPFAM" id="SSF52096">
    <property type="entry name" value="ClpP/crotonase"/>
    <property type="match status" value="1"/>
</dbReference>
<dbReference type="SUPFAM" id="SSF51735">
    <property type="entry name" value="NAD(P)-binding Rossmann-fold domains"/>
    <property type="match status" value="1"/>
</dbReference>
<dbReference type="PROSITE" id="PS00067">
    <property type="entry name" value="3HCDH"/>
    <property type="match status" value="1"/>
</dbReference>
<keyword id="KW-0276">Fatty acid metabolism</keyword>
<keyword id="KW-0413">Isomerase</keyword>
<keyword id="KW-0442">Lipid degradation</keyword>
<keyword id="KW-0443">Lipid metabolism</keyword>
<keyword id="KW-0456">Lyase</keyword>
<keyword id="KW-0511">Multifunctional enzyme</keyword>
<keyword id="KW-0520">NAD</keyword>
<keyword id="KW-0560">Oxidoreductase</keyword>
<accession>C3LSI3</accession>
<organism>
    <name type="scientific">Vibrio cholerae serotype O1 (strain M66-2)</name>
    <dbReference type="NCBI Taxonomy" id="579112"/>
    <lineage>
        <taxon>Bacteria</taxon>
        <taxon>Pseudomonadati</taxon>
        <taxon>Pseudomonadota</taxon>
        <taxon>Gammaproteobacteria</taxon>
        <taxon>Vibrionales</taxon>
        <taxon>Vibrionaceae</taxon>
        <taxon>Vibrio</taxon>
    </lineage>
</organism>
<sequence length="723" mass="78108">MIYQAKTLQVKQLANGIAELSFCAPASVNKLDLHTLESLDKALDALAADSSVKGLLLSSDKEAFIVGADITEFLGLFAKPEAELDEWLQFANRIFNKLEDLPFPTLSALKGHTLGGGCECVLATDFRIGDATTSIGLPETKLGIMPGFGGTVRLPRLIGADSAMEIITQGKACRAEEALKVGLLDAIVDSDKLIDSAITTLTQAIEEKLDWQKRRQQKTSALTLSKLEAMMSFTMAKGMVAQVAGKHYPAPMTSVVTIEEAARLPRDAALDIERKHFIKLAKSTEAQALVGIFLNDQYIKGLAKQSAKAASQDTQHAAVLGAGIMGGGIAYQSALKGVPVLMKDIAPHSLELGMTEAAKLLNKQLERGKIDGFKMAGILASITPSLHYAGIDQADVIVEAVVENPKVKAAVLSEVEGLVDTETILTSNTSTIPINLLAKSLKRPQNFCGMHFFNPVHRMPLVEIIRGEHTSEDTINRVVAYAAKMGKSPIVVNDCPGFFVNRVLFPYFAGFSLLMRDGANFTEIDKVMERQFGWPMGPAYLLDVVGIDTAHHAQAVMAEGFPTRMAKSGREAIDALYEAKKFGQKNGSGFYQYTVDKKGKPKKAFSDDVLAILAPVCGAPQSFDPQTLIERTMIPMINEVVLCLEEGIIASAQEADMALVYGLGFPPFRGGVFRYLDTIGIANYVAMAEKYADLGALYQVPQLLKNMAQQGTSFYSAQQVSAL</sequence>
<feature type="chain" id="PRO_1000186057" description="Fatty acid oxidation complex subunit alpha">
    <location>
        <begin position="1"/>
        <end position="723"/>
    </location>
</feature>
<feature type="region of interest" description="Enoyl-CoA hydratase/isomerase" evidence="1">
    <location>
        <begin position="1"/>
        <end position="189"/>
    </location>
</feature>
<feature type="region of interest" description="3-hydroxyacyl-CoA dehydrogenase" evidence="1">
    <location>
        <begin position="311"/>
        <end position="723"/>
    </location>
</feature>
<feature type="active site" description="For 3-hydroxyacyl-CoA dehydrogenase activity" evidence="1">
    <location>
        <position position="451"/>
    </location>
</feature>
<feature type="binding site" evidence="1">
    <location>
        <position position="296"/>
    </location>
    <ligand>
        <name>substrate</name>
    </ligand>
</feature>
<feature type="binding site" evidence="1">
    <location>
        <position position="325"/>
    </location>
    <ligand>
        <name>NAD(+)</name>
        <dbReference type="ChEBI" id="CHEBI:57540"/>
    </ligand>
</feature>
<feature type="binding site" evidence="1">
    <location>
        <position position="344"/>
    </location>
    <ligand>
        <name>NAD(+)</name>
        <dbReference type="ChEBI" id="CHEBI:57540"/>
    </ligand>
</feature>
<feature type="binding site" evidence="1">
    <location>
        <begin position="401"/>
        <end position="403"/>
    </location>
    <ligand>
        <name>NAD(+)</name>
        <dbReference type="ChEBI" id="CHEBI:57540"/>
    </ligand>
</feature>
<feature type="binding site" evidence="1">
    <location>
        <position position="408"/>
    </location>
    <ligand>
        <name>NAD(+)</name>
        <dbReference type="ChEBI" id="CHEBI:57540"/>
    </ligand>
</feature>
<feature type="binding site" evidence="1">
    <location>
        <position position="430"/>
    </location>
    <ligand>
        <name>NAD(+)</name>
        <dbReference type="ChEBI" id="CHEBI:57540"/>
    </ligand>
</feature>
<feature type="binding site" evidence="1">
    <location>
        <position position="454"/>
    </location>
    <ligand>
        <name>NAD(+)</name>
        <dbReference type="ChEBI" id="CHEBI:57540"/>
    </ligand>
</feature>
<feature type="binding site" evidence="1">
    <location>
        <position position="501"/>
    </location>
    <ligand>
        <name>substrate</name>
    </ligand>
</feature>
<feature type="binding site" evidence="1">
    <location>
        <position position="661"/>
    </location>
    <ligand>
        <name>substrate</name>
    </ligand>
</feature>
<feature type="site" description="Important for catalytic activity" evidence="1">
    <location>
        <position position="119"/>
    </location>
</feature>
<feature type="site" description="Important for catalytic activity" evidence="1">
    <location>
        <position position="139"/>
    </location>
</feature>
<comment type="function">
    <text evidence="1">Involved in the aerobic and anaerobic degradation of long-chain fatty acids via beta-oxidation cycle. Catalyzes the formation of 3-oxoacyl-CoA from enoyl-CoA via L-3-hydroxyacyl-CoA. It can also use D-3-hydroxyacyl-CoA and cis-3-enoyl-CoA as substrate.</text>
</comment>
<comment type="catalytic activity">
    <reaction evidence="1">
        <text>a (3S)-3-hydroxyacyl-CoA + NAD(+) = a 3-oxoacyl-CoA + NADH + H(+)</text>
        <dbReference type="Rhea" id="RHEA:22432"/>
        <dbReference type="ChEBI" id="CHEBI:15378"/>
        <dbReference type="ChEBI" id="CHEBI:57318"/>
        <dbReference type="ChEBI" id="CHEBI:57540"/>
        <dbReference type="ChEBI" id="CHEBI:57945"/>
        <dbReference type="ChEBI" id="CHEBI:90726"/>
        <dbReference type="EC" id="1.1.1.35"/>
    </reaction>
</comment>
<comment type="catalytic activity">
    <reaction evidence="1">
        <text>a (3S)-3-hydroxyacyl-CoA = a (2E)-enoyl-CoA + H2O</text>
        <dbReference type="Rhea" id="RHEA:16105"/>
        <dbReference type="ChEBI" id="CHEBI:15377"/>
        <dbReference type="ChEBI" id="CHEBI:57318"/>
        <dbReference type="ChEBI" id="CHEBI:58856"/>
        <dbReference type="EC" id="4.2.1.17"/>
    </reaction>
</comment>
<comment type="catalytic activity">
    <reaction evidence="1">
        <text>a 4-saturated-(3S)-3-hydroxyacyl-CoA = a (3E)-enoyl-CoA + H2O</text>
        <dbReference type="Rhea" id="RHEA:20724"/>
        <dbReference type="ChEBI" id="CHEBI:15377"/>
        <dbReference type="ChEBI" id="CHEBI:58521"/>
        <dbReference type="ChEBI" id="CHEBI:137480"/>
        <dbReference type="EC" id="4.2.1.17"/>
    </reaction>
</comment>
<comment type="catalytic activity">
    <reaction evidence="1">
        <text>(3S)-3-hydroxybutanoyl-CoA = (3R)-3-hydroxybutanoyl-CoA</text>
        <dbReference type="Rhea" id="RHEA:21760"/>
        <dbReference type="ChEBI" id="CHEBI:57315"/>
        <dbReference type="ChEBI" id="CHEBI:57316"/>
        <dbReference type="EC" id="5.1.2.3"/>
    </reaction>
</comment>
<comment type="catalytic activity">
    <reaction evidence="1">
        <text>a (3Z)-enoyl-CoA = a 4-saturated (2E)-enoyl-CoA</text>
        <dbReference type="Rhea" id="RHEA:45900"/>
        <dbReference type="ChEBI" id="CHEBI:85097"/>
        <dbReference type="ChEBI" id="CHEBI:85489"/>
        <dbReference type="EC" id="5.3.3.8"/>
    </reaction>
</comment>
<comment type="catalytic activity">
    <reaction evidence="1">
        <text>a (3E)-enoyl-CoA = a 4-saturated (2E)-enoyl-CoA</text>
        <dbReference type="Rhea" id="RHEA:45228"/>
        <dbReference type="ChEBI" id="CHEBI:58521"/>
        <dbReference type="ChEBI" id="CHEBI:85097"/>
        <dbReference type="EC" id="5.3.3.8"/>
    </reaction>
</comment>
<comment type="pathway">
    <text evidence="1">Lipid metabolism; fatty acid beta-oxidation.</text>
</comment>
<comment type="subunit">
    <text evidence="1">Heterotetramer of two alpha chains (FadB) and two beta chains (FadA).</text>
</comment>
<comment type="similarity">
    <text evidence="1">In the N-terminal section; belongs to the enoyl-CoA hydratase/isomerase family.</text>
</comment>
<comment type="similarity">
    <text evidence="1">In the C-terminal section; belongs to the 3-hydroxyacyl-CoA dehydrogenase family.</text>
</comment>
<protein>
    <recommendedName>
        <fullName evidence="1">Fatty acid oxidation complex subunit alpha</fullName>
    </recommendedName>
    <domain>
        <recommendedName>
            <fullName evidence="1">Enoyl-CoA hydratase/Delta(3)-cis-Delta(2)-trans-enoyl-CoA isomerase/3-hydroxybutyryl-CoA epimerase</fullName>
            <ecNumber evidence="1">4.2.1.17</ecNumber>
            <ecNumber evidence="1">5.1.2.3</ecNumber>
            <ecNumber evidence="1">5.3.3.8</ecNumber>
        </recommendedName>
    </domain>
    <domain>
        <recommendedName>
            <fullName evidence="1">3-hydroxyacyl-CoA dehydrogenase</fullName>
            <ecNumber evidence="1">1.1.1.35</ecNumber>
        </recommendedName>
    </domain>
</protein>
<proteinExistence type="inferred from homology"/>